<name>UVRA_DEIRA</name>
<dbReference type="EMBL" id="U52145">
    <property type="protein sequence ID" value="AAC44646.1"/>
    <property type="molecule type" value="Genomic_DNA"/>
</dbReference>
<dbReference type="EMBL" id="AB001610">
    <property type="protein sequence ID" value="BAA21368.1"/>
    <property type="molecule type" value="Genomic_DNA"/>
</dbReference>
<dbReference type="EMBL" id="AE000513">
    <property type="protein sequence ID" value="AAF11324.1"/>
    <property type="molecule type" value="Genomic_DNA"/>
</dbReference>
<dbReference type="PIR" id="H75356">
    <property type="entry name" value="H75356"/>
</dbReference>
<dbReference type="RefSeq" id="NP_295494.1">
    <property type="nucleotide sequence ID" value="NC_001263.1"/>
</dbReference>
<dbReference type="RefSeq" id="WP_010888406.1">
    <property type="nucleotide sequence ID" value="NC_001263.1"/>
</dbReference>
<dbReference type="SMR" id="Q46577"/>
<dbReference type="FunCoup" id="Q46577">
    <property type="interactions" value="295"/>
</dbReference>
<dbReference type="STRING" id="243230.DR_1771"/>
<dbReference type="PaxDb" id="243230-DR_1771"/>
<dbReference type="EnsemblBacteria" id="AAF11324">
    <property type="protein sequence ID" value="AAF11324"/>
    <property type="gene ID" value="DR_1771"/>
</dbReference>
<dbReference type="GeneID" id="69518011"/>
<dbReference type="KEGG" id="dra:DR_1771"/>
<dbReference type="PATRIC" id="fig|243230.17.peg.1983"/>
<dbReference type="eggNOG" id="COG0178">
    <property type="taxonomic scope" value="Bacteria"/>
</dbReference>
<dbReference type="HOGENOM" id="CLU_001370_0_2_0"/>
<dbReference type="InParanoid" id="Q46577"/>
<dbReference type="OrthoDB" id="9809851at2"/>
<dbReference type="Proteomes" id="UP000002524">
    <property type="component" value="Chromosome 1"/>
</dbReference>
<dbReference type="GO" id="GO:0005737">
    <property type="term" value="C:cytoplasm"/>
    <property type="evidence" value="ECO:0007669"/>
    <property type="project" value="UniProtKB-SubCell"/>
</dbReference>
<dbReference type="GO" id="GO:0009380">
    <property type="term" value="C:excinuclease repair complex"/>
    <property type="evidence" value="ECO:0007669"/>
    <property type="project" value="InterPro"/>
</dbReference>
<dbReference type="GO" id="GO:0005524">
    <property type="term" value="F:ATP binding"/>
    <property type="evidence" value="ECO:0007669"/>
    <property type="project" value="UniProtKB-UniRule"/>
</dbReference>
<dbReference type="GO" id="GO:0016887">
    <property type="term" value="F:ATP hydrolysis activity"/>
    <property type="evidence" value="ECO:0007669"/>
    <property type="project" value="InterPro"/>
</dbReference>
<dbReference type="GO" id="GO:0003677">
    <property type="term" value="F:DNA binding"/>
    <property type="evidence" value="ECO:0007669"/>
    <property type="project" value="UniProtKB-UniRule"/>
</dbReference>
<dbReference type="GO" id="GO:0009381">
    <property type="term" value="F:excinuclease ABC activity"/>
    <property type="evidence" value="ECO:0007669"/>
    <property type="project" value="UniProtKB-UniRule"/>
</dbReference>
<dbReference type="GO" id="GO:0008270">
    <property type="term" value="F:zinc ion binding"/>
    <property type="evidence" value="ECO:0007669"/>
    <property type="project" value="UniProtKB-UniRule"/>
</dbReference>
<dbReference type="GO" id="GO:0006289">
    <property type="term" value="P:nucleotide-excision repair"/>
    <property type="evidence" value="ECO:0007669"/>
    <property type="project" value="UniProtKB-UniRule"/>
</dbReference>
<dbReference type="GO" id="GO:0009432">
    <property type="term" value="P:SOS response"/>
    <property type="evidence" value="ECO:0007669"/>
    <property type="project" value="UniProtKB-UniRule"/>
</dbReference>
<dbReference type="CDD" id="cd03270">
    <property type="entry name" value="ABC_UvrA_I"/>
    <property type="match status" value="1"/>
</dbReference>
<dbReference type="CDD" id="cd03271">
    <property type="entry name" value="ABC_UvrA_II"/>
    <property type="match status" value="1"/>
</dbReference>
<dbReference type="FunFam" id="1.20.1580.10:FF:000002">
    <property type="entry name" value="UvrABC system protein A"/>
    <property type="match status" value="1"/>
</dbReference>
<dbReference type="Gene3D" id="3.30.190.20">
    <property type="match status" value="1"/>
</dbReference>
<dbReference type="Gene3D" id="1.10.8.280">
    <property type="entry name" value="ABC transporter ATPase domain-like"/>
    <property type="match status" value="1"/>
</dbReference>
<dbReference type="Gene3D" id="1.20.1580.10">
    <property type="entry name" value="ABC transporter ATPase like domain"/>
    <property type="match status" value="3"/>
</dbReference>
<dbReference type="Gene3D" id="3.40.50.300">
    <property type="entry name" value="P-loop containing nucleotide triphosphate hydrolases"/>
    <property type="match status" value="3"/>
</dbReference>
<dbReference type="HAMAP" id="MF_00205">
    <property type="entry name" value="UvrA"/>
    <property type="match status" value="1"/>
</dbReference>
<dbReference type="InterPro" id="IPR003593">
    <property type="entry name" value="AAA+_ATPase"/>
</dbReference>
<dbReference type="InterPro" id="IPR003439">
    <property type="entry name" value="ABC_transporter-like_ATP-bd"/>
</dbReference>
<dbReference type="InterPro" id="IPR017871">
    <property type="entry name" value="ABC_transporter-like_CS"/>
</dbReference>
<dbReference type="InterPro" id="IPR027417">
    <property type="entry name" value="P-loop_NTPase"/>
</dbReference>
<dbReference type="InterPro" id="IPR004602">
    <property type="entry name" value="UvrA"/>
</dbReference>
<dbReference type="InterPro" id="IPR041552">
    <property type="entry name" value="UvrA_DNA-bd"/>
</dbReference>
<dbReference type="InterPro" id="IPR041102">
    <property type="entry name" value="UvrA_inter"/>
</dbReference>
<dbReference type="NCBIfam" id="NF001503">
    <property type="entry name" value="PRK00349.1"/>
    <property type="match status" value="1"/>
</dbReference>
<dbReference type="NCBIfam" id="TIGR00630">
    <property type="entry name" value="uvra"/>
    <property type="match status" value="1"/>
</dbReference>
<dbReference type="PANTHER" id="PTHR43152">
    <property type="entry name" value="UVRABC SYSTEM PROTEIN A"/>
    <property type="match status" value="1"/>
</dbReference>
<dbReference type="PANTHER" id="PTHR43152:SF3">
    <property type="entry name" value="UVRABC SYSTEM PROTEIN A"/>
    <property type="match status" value="1"/>
</dbReference>
<dbReference type="Pfam" id="PF17755">
    <property type="entry name" value="UvrA_DNA-bind"/>
    <property type="match status" value="1"/>
</dbReference>
<dbReference type="Pfam" id="PF17760">
    <property type="entry name" value="UvrA_inter"/>
    <property type="match status" value="1"/>
</dbReference>
<dbReference type="SMART" id="SM00382">
    <property type="entry name" value="AAA"/>
    <property type="match status" value="1"/>
</dbReference>
<dbReference type="SUPFAM" id="SSF52540">
    <property type="entry name" value="P-loop containing nucleoside triphosphate hydrolases"/>
    <property type="match status" value="2"/>
</dbReference>
<dbReference type="PROSITE" id="PS00211">
    <property type="entry name" value="ABC_TRANSPORTER_1"/>
    <property type="match status" value="2"/>
</dbReference>
<dbReference type="PROSITE" id="PS50893">
    <property type="entry name" value="ABC_TRANSPORTER_2"/>
    <property type="match status" value="1"/>
</dbReference>
<proteinExistence type="inferred from homology"/>
<keyword id="KW-0067">ATP-binding</keyword>
<keyword id="KW-0963">Cytoplasm</keyword>
<keyword id="KW-0227">DNA damage</keyword>
<keyword id="KW-0228">DNA excision</keyword>
<keyword id="KW-0234">DNA repair</keyword>
<keyword id="KW-0238">DNA-binding</keyword>
<keyword id="KW-0267">Excision nuclease</keyword>
<keyword id="KW-0479">Metal-binding</keyword>
<keyword id="KW-0547">Nucleotide-binding</keyword>
<keyword id="KW-1185">Reference proteome</keyword>
<keyword id="KW-0677">Repeat</keyword>
<keyword id="KW-0742">SOS response</keyword>
<keyword id="KW-0862">Zinc</keyword>
<keyword id="KW-0863">Zinc-finger</keyword>
<accession>Q46577</accession>
<accession>O32498</accession>
<comment type="function">
    <text evidence="1">The UvrABC repair system catalyzes the recognition and processing of DNA lesions. UvrA is an ATPase and a DNA-binding protein. A damage recognition complex composed of 2 UvrA and 2 UvrB subunits scans DNA for abnormalities. When the presence of a lesion has been verified by UvrB, the UvrA molecules dissociate.</text>
</comment>
<comment type="subunit">
    <text evidence="1">Forms a heterotetramer with UvrB during the search for lesions.</text>
</comment>
<comment type="subcellular location">
    <subcellularLocation>
        <location evidence="1">Cytoplasm</location>
    </subcellularLocation>
</comment>
<comment type="similarity">
    <text evidence="1">Belongs to the ABC transporter superfamily. UvrA family.</text>
</comment>
<organism>
    <name type="scientific">Deinococcus radiodurans (strain ATCC 13939 / DSM 20539 / JCM 16871 / CCUG 27074 / LMG 4051 / NBRC 15346 / NCIMB 9279 / VKM B-1422 / R1)</name>
    <dbReference type="NCBI Taxonomy" id="243230"/>
    <lineage>
        <taxon>Bacteria</taxon>
        <taxon>Thermotogati</taxon>
        <taxon>Deinococcota</taxon>
        <taxon>Deinococci</taxon>
        <taxon>Deinococcales</taxon>
        <taxon>Deinococcaceae</taxon>
        <taxon>Deinococcus</taxon>
    </lineage>
</organism>
<reference key="1">
    <citation type="journal article" date="1996" name="J. Bacteriol.">
        <title>Identification and characterization of uvrA, a DNA repair gene of Deinococcus radiodurans.</title>
        <authorList>
            <person name="Agostini H.J."/>
            <person name="Carroll J.D."/>
            <person name="Minton K.W."/>
        </authorList>
    </citation>
    <scope>NUCLEOTIDE SEQUENCE [GENOMIC DNA]</scope>
    <source>
        <strain>ATCC 13939 / DSM 20539 / JCM 16871 / CCUG 27074 / LMG 4051 / NBRC 15346 / NCIMB 9279 / VKM B-1422 / R1</strain>
    </source>
</reference>
<reference key="2">
    <citation type="journal article" date="1997" name="Gene">
        <title>The Deinococcus radiodurans uvr A gene: identification of mutation sites in two mitomycin-sensitive strains and the first discovery of insertion sequence element from deinobacteria.</title>
        <authorList>
            <person name="Narumi I."/>
            <person name="Cherdchu K."/>
            <person name="Kitayama S."/>
            <person name="Watanabe H."/>
        </authorList>
    </citation>
    <scope>NUCLEOTIDE SEQUENCE [GENOMIC DNA]</scope>
    <source>
        <strain>KD8301</strain>
    </source>
</reference>
<reference key="3">
    <citation type="journal article" date="1999" name="Science">
        <title>Genome sequence of the radioresistant bacterium Deinococcus radiodurans R1.</title>
        <authorList>
            <person name="White O."/>
            <person name="Eisen J.A."/>
            <person name="Heidelberg J.F."/>
            <person name="Hickey E.K."/>
            <person name="Peterson J.D."/>
            <person name="Dodson R.J."/>
            <person name="Haft D.H."/>
            <person name="Gwinn M.L."/>
            <person name="Nelson W.C."/>
            <person name="Richardson D.L."/>
            <person name="Moffat K.S."/>
            <person name="Qin H."/>
            <person name="Jiang L."/>
            <person name="Pamphile W."/>
            <person name="Crosby M."/>
            <person name="Shen M."/>
            <person name="Vamathevan J.J."/>
            <person name="Lam P."/>
            <person name="McDonald L.A."/>
            <person name="Utterback T.R."/>
            <person name="Zalewski C."/>
            <person name="Makarova K.S."/>
            <person name="Aravind L."/>
            <person name="Daly M.J."/>
            <person name="Minton K.W."/>
            <person name="Fleischmann R.D."/>
            <person name="Ketchum K.A."/>
            <person name="Nelson K.E."/>
            <person name="Salzberg S.L."/>
            <person name="Smith H.O."/>
            <person name="Venter J.C."/>
            <person name="Fraser C.M."/>
        </authorList>
    </citation>
    <scope>NUCLEOTIDE SEQUENCE [LARGE SCALE GENOMIC DNA]</scope>
    <source>
        <strain>ATCC 13939 / DSM 20539 / JCM 16871 / CCUG 27074 / LMG 4051 / NBRC 15346 / NCIMB 9279 / VKM B-1422 / R1</strain>
    </source>
</reference>
<protein>
    <recommendedName>
        <fullName evidence="1">UvrABC system protein A</fullName>
        <shortName evidence="1">UvrA protein</shortName>
    </recommendedName>
    <alternativeName>
        <fullName evidence="1">Excinuclease ABC subunit A</fullName>
    </alternativeName>
</protein>
<evidence type="ECO:0000255" key="1">
    <source>
        <dbReference type="HAMAP-Rule" id="MF_00205"/>
    </source>
</evidence>
<evidence type="ECO:0000256" key="2">
    <source>
        <dbReference type="SAM" id="MobiDB-lite"/>
    </source>
</evidence>
<evidence type="ECO:0000305" key="3"/>
<feature type="chain" id="PRO_0000093048" description="UvrABC system protein A">
    <location>
        <begin position="1"/>
        <end position="1016"/>
    </location>
</feature>
<feature type="domain" description="ABC transporter 1" evidence="1">
    <location>
        <begin position="315"/>
        <end position="627"/>
    </location>
</feature>
<feature type="domain" description="ABC transporter 2" evidence="1">
    <location>
        <begin position="647"/>
        <end position="975"/>
    </location>
</feature>
<feature type="zinc finger region" description="C4-type" evidence="1">
    <location>
        <begin position="259"/>
        <end position="286"/>
    </location>
</feature>
<feature type="zinc finger region" description="C4-type" evidence="1">
    <location>
        <begin position="778"/>
        <end position="804"/>
    </location>
</feature>
<feature type="region of interest" description="Disordered" evidence="2">
    <location>
        <begin position="984"/>
        <end position="1016"/>
    </location>
</feature>
<feature type="compositionally biased region" description="Basic and acidic residues" evidence="2">
    <location>
        <begin position="985"/>
        <end position="996"/>
    </location>
</feature>
<feature type="binding site" evidence="1">
    <location>
        <begin position="32"/>
        <end position="39"/>
    </location>
    <ligand>
        <name>ATP</name>
        <dbReference type="ChEBI" id="CHEBI:30616"/>
    </ligand>
</feature>
<feature type="binding site" evidence="1">
    <location>
        <begin position="679"/>
        <end position="686"/>
    </location>
    <ligand>
        <name>ATP</name>
        <dbReference type="ChEBI" id="CHEBI:30616"/>
    </ligand>
</feature>
<feature type="sequence conflict" description="In Ref. 1; AAC44646." evidence="3" ref="1">
    <original>A</original>
    <variation>P</variation>
    <location>
        <position position="282"/>
    </location>
</feature>
<feature type="sequence conflict" description="In Ref. 1; AAC44646." evidence="3" ref="1">
    <original>DTE</original>
    <variation>TP</variation>
    <location>
        <begin position="395"/>
        <end position="397"/>
    </location>
</feature>
<feature type="sequence conflict" description="In Ref. 1; AAC44646." evidence="3" ref="1">
    <original>R</original>
    <variation>A</variation>
    <location>
        <position position="470"/>
    </location>
</feature>
<feature type="sequence conflict" description="In Ref. 1; AAC44646." evidence="3" ref="1">
    <original>V</original>
    <variation>E</variation>
    <location>
        <position position="677"/>
    </location>
</feature>
<feature type="sequence conflict" description="In Ref. 1; AAC44646." evidence="3" ref="1">
    <original>G</original>
    <variation>R</variation>
    <location>
        <position position="682"/>
    </location>
</feature>
<sequence>MQDKLIVRGAREHNLKDITVELPRDRFVVITGVSGSGKSTLAFDTIYAEGQRRYVESLSAYARQFLGLMEKPDVDSITGLSPAISIDQKTTSHNPRSTVGTVTEIHDYLRLLYARVGTPYCPICGRKIEKQSPSEVTDRLLAGFPDKRAILLAPAVRGRKGEYKKLFADLRREGYARVRVDGTLYELEEAEKLKLEKFEKHDVDIVIDRLTLRESDRSRIAESVELGIRRGEGLLRVLLPDAGEDGGAHEELYSEKFACPEHGSVLEELEPRSFSFNSPYGACGDCAGIGAKQEFSPERIIDEKLSIAGGAIIPWTKKGADAGIYYWDKLKALAEHLDFDLKTPWKDLPAKAQKAVLHGPGEAFEVVYRRGGKETMRFMTEFEGVITNLERRYADTESEFMRERLEELMELRPCPTCGGTRYKPEILAVRVGGLNISQTSGMSVLDADAFFQQLQEGELDHAAIEPFLKRHTGGTAKAHGPLHYEYDLGTFGAAVAAPILRAIRTRLKFLVDVGLDYLSLDRTANTLSGGEAQRIRLATQVGSGLTGVLYVLDEPSIGLHPKDNGRLIGTLKNLRDLGNSLLVVEHDEDTMLEADYLIDMGPGAGVHGGEVIASGTPEQVKQDKNSLTGKYLRGEMKIEVPAERRPGNGKFLKVFGARQNNLQDVDVSIPLGTMTVVTGPSGSGKSTLIHDILHATLARELNGAKTTPGLYDRIEGMEQLDKVIEIDQSPIGRTPRSNPATYTGVFTEIRDLFTRTPEARRRGYQAGRFSFNVKGGRCEHCKGDGVMKIEMNFLPDIYVPCEVCHGARYNRETLEVKYNHKTIADVLDLTVEDAHEFFEAIPTIERKMQLLLDVGLGYMKIGQPSTTLSGGEAQRIKLATELSKRATGRTIYILDEPTTGLHFEDVRKLMDVLQRLAEGGNTLVIIEHNLDVMKSADYLIDLGPEGGVRGGTVVAVGTPEEVAAHPTSYTGEYLRKVPGIVAAEPRARGEKAEKPAKAKAPAKKRTKKQTELVEAD</sequence>
<gene>
    <name evidence="1" type="primary">uvrA</name>
    <name type="ordered locus">DR_1771</name>
</gene>